<comment type="function">
    <text evidence="1">Catalyzes the oxidation of 5,10-methylenetetrahydrofolate to 5,10-methenyltetrahydrofolate and then the hydrolysis of 5,10-methenyltetrahydrofolate to 10-formyltetrahydrofolate.</text>
</comment>
<comment type="catalytic activity">
    <reaction evidence="1">
        <text>(6R)-5,10-methylene-5,6,7,8-tetrahydrofolate + NADP(+) = (6R)-5,10-methenyltetrahydrofolate + NADPH</text>
        <dbReference type="Rhea" id="RHEA:22812"/>
        <dbReference type="ChEBI" id="CHEBI:15636"/>
        <dbReference type="ChEBI" id="CHEBI:57455"/>
        <dbReference type="ChEBI" id="CHEBI:57783"/>
        <dbReference type="ChEBI" id="CHEBI:58349"/>
        <dbReference type="EC" id="1.5.1.5"/>
    </reaction>
</comment>
<comment type="catalytic activity">
    <reaction evidence="1">
        <text>(6R)-5,10-methenyltetrahydrofolate + H2O = (6R)-10-formyltetrahydrofolate + H(+)</text>
        <dbReference type="Rhea" id="RHEA:23700"/>
        <dbReference type="ChEBI" id="CHEBI:15377"/>
        <dbReference type="ChEBI" id="CHEBI:15378"/>
        <dbReference type="ChEBI" id="CHEBI:57455"/>
        <dbReference type="ChEBI" id="CHEBI:195366"/>
        <dbReference type="EC" id="3.5.4.9"/>
    </reaction>
</comment>
<comment type="pathway">
    <text evidence="1">One-carbon metabolism; tetrahydrofolate interconversion.</text>
</comment>
<comment type="subunit">
    <text evidence="1">Homodimer.</text>
</comment>
<comment type="similarity">
    <text evidence="1">Belongs to the tetrahydrofolate dehydrogenase/cyclohydrolase family.</text>
</comment>
<protein>
    <recommendedName>
        <fullName evidence="1">Bifunctional protein FolD</fullName>
    </recommendedName>
    <domain>
        <recommendedName>
            <fullName evidence="1">Methylenetetrahydrofolate dehydrogenase</fullName>
            <ecNumber evidence="1">1.5.1.5</ecNumber>
        </recommendedName>
    </domain>
    <domain>
        <recommendedName>
            <fullName evidence="1">Methenyltetrahydrofolate cyclohydrolase</fullName>
            <ecNumber evidence="1">3.5.4.9</ecNumber>
        </recommendedName>
    </domain>
</protein>
<keyword id="KW-0028">Amino-acid biosynthesis</keyword>
<keyword id="KW-0368">Histidine biosynthesis</keyword>
<keyword id="KW-0378">Hydrolase</keyword>
<keyword id="KW-0486">Methionine biosynthesis</keyword>
<keyword id="KW-0511">Multifunctional enzyme</keyword>
<keyword id="KW-0521">NADP</keyword>
<keyword id="KW-0554">One-carbon metabolism</keyword>
<keyword id="KW-0560">Oxidoreductase</keyword>
<keyword id="KW-0658">Purine biosynthesis</keyword>
<reference key="1">
    <citation type="journal article" date="2009" name="PLoS Genet.">
        <title>Organised genome dynamics in the Escherichia coli species results in highly diverse adaptive paths.</title>
        <authorList>
            <person name="Touchon M."/>
            <person name="Hoede C."/>
            <person name="Tenaillon O."/>
            <person name="Barbe V."/>
            <person name="Baeriswyl S."/>
            <person name="Bidet P."/>
            <person name="Bingen E."/>
            <person name="Bonacorsi S."/>
            <person name="Bouchier C."/>
            <person name="Bouvet O."/>
            <person name="Calteau A."/>
            <person name="Chiapello H."/>
            <person name="Clermont O."/>
            <person name="Cruveiller S."/>
            <person name="Danchin A."/>
            <person name="Diard M."/>
            <person name="Dossat C."/>
            <person name="Karoui M.E."/>
            <person name="Frapy E."/>
            <person name="Garry L."/>
            <person name="Ghigo J.M."/>
            <person name="Gilles A.M."/>
            <person name="Johnson J."/>
            <person name="Le Bouguenec C."/>
            <person name="Lescat M."/>
            <person name="Mangenot S."/>
            <person name="Martinez-Jehanne V."/>
            <person name="Matic I."/>
            <person name="Nassif X."/>
            <person name="Oztas S."/>
            <person name="Petit M.A."/>
            <person name="Pichon C."/>
            <person name="Rouy Z."/>
            <person name="Ruf C.S."/>
            <person name="Schneider D."/>
            <person name="Tourret J."/>
            <person name="Vacherie B."/>
            <person name="Vallenet D."/>
            <person name="Medigue C."/>
            <person name="Rocha E.P.C."/>
            <person name="Denamur E."/>
        </authorList>
    </citation>
    <scope>NUCLEOTIDE SEQUENCE [LARGE SCALE GENOMIC DNA]</scope>
    <source>
        <strain>ATCC 35469 / DSM 13698 / BCRC 15582 / CCUG 18766 / IAM 14443 / JCM 21226 / LMG 7866 / NBRC 102419 / NCTC 12128 / CDC 0568-73</strain>
    </source>
</reference>
<sequence>MAAKIIDGKTIAQQVRSEVAQKVQARVAAGLRAPGLAVVLVGSNPASQIYVASKRKACEEVGFVSRSYDLPETTSEAELLELIDVLNADNTIDGILVQLPLPAGIDNVKVLERIHPDKDVDGFHPYNVGRLCQRAPRLRPCTPRGIVTLLERYNIDTFGLNAVVIGASNIVGRPMSMELLLAGCTTTVTHRFTKNLRHHVENADLLIVAVGKPGFIPGDWIKEGAIVIDVGINRLENGKVVGDVVFEDAAKRASYITPVPGGVGPMTVATLIENTLQACVEYHDPQDE</sequence>
<proteinExistence type="inferred from homology"/>
<gene>
    <name evidence="1" type="primary">folD</name>
    <name type="ordered locus">EFER_0571</name>
</gene>
<name>FOLD_ESCF3</name>
<feature type="chain" id="PRO_1000196779" description="Bifunctional protein FolD">
    <location>
        <begin position="1"/>
        <end position="288"/>
    </location>
</feature>
<feature type="binding site" evidence="1">
    <location>
        <begin position="166"/>
        <end position="168"/>
    </location>
    <ligand>
        <name>NADP(+)</name>
        <dbReference type="ChEBI" id="CHEBI:58349"/>
    </ligand>
</feature>
<feature type="binding site" evidence="1">
    <location>
        <position position="232"/>
    </location>
    <ligand>
        <name>NADP(+)</name>
        <dbReference type="ChEBI" id="CHEBI:58349"/>
    </ligand>
</feature>
<accession>B7LJI7</accession>
<organism>
    <name type="scientific">Escherichia fergusonii (strain ATCC 35469 / DSM 13698 / CCUG 18766 / IAM 14443 / JCM 21226 / LMG 7866 / NBRC 102419 / NCTC 12128 / CDC 0568-73)</name>
    <dbReference type="NCBI Taxonomy" id="585054"/>
    <lineage>
        <taxon>Bacteria</taxon>
        <taxon>Pseudomonadati</taxon>
        <taxon>Pseudomonadota</taxon>
        <taxon>Gammaproteobacteria</taxon>
        <taxon>Enterobacterales</taxon>
        <taxon>Enterobacteriaceae</taxon>
        <taxon>Escherichia</taxon>
    </lineage>
</organism>
<dbReference type="EC" id="1.5.1.5" evidence="1"/>
<dbReference type="EC" id="3.5.4.9" evidence="1"/>
<dbReference type="EMBL" id="CU928158">
    <property type="protein sequence ID" value="CAQ88118.1"/>
    <property type="molecule type" value="Genomic_DNA"/>
</dbReference>
<dbReference type="RefSeq" id="WP_000729174.1">
    <property type="nucleotide sequence ID" value="NC_011740.1"/>
</dbReference>
<dbReference type="SMR" id="B7LJI7"/>
<dbReference type="GeneID" id="75058368"/>
<dbReference type="KEGG" id="efe:EFER_0571"/>
<dbReference type="HOGENOM" id="CLU_034045_2_1_6"/>
<dbReference type="OrthoDB" id="9803580at2"/>
<dbReference type="UniPathway" id="UPA00193"/>
<dbReference type="Proteomes" id="UP000000745">
    <property type="component" value="Chromosome"/>
</dbReference>
<dbReference type="GO" id="GO:0005829">
    <property type="term" value="C:cytosol"/>
    <property type="evidence" value="ECO:0007669"/>
    <property type="project" value="TreeGrafter"/>
</dbReference>
<dbReference type="GO" id="GO:0004477">
    <property type="term" value="F:methenyltetrahydrofolate cyclohydrolase activity"/>
    <property type="evidence" value="ECO:0007669"/>
    <property type="project" value="UniProtKB-UniRule"/>
</dbReference>
<dbReference type="GO" id="GO:0004488">
    <property type="term" value="F:methylenetetrahydrofolate dehydrogenase (NADP+) activity"/>
    <property type="evidence" value="ECO:0007669"/>
    <property type="project" value="UniProtKB-UniRule"/>
</dbReference>
<dbReference type="GO" id="GO:0000105">
    <property type="term" value="P:L-histidine biosynthetic process"/>
    <property type="evidence" value="ECO:0007669"/>
    <property type="project" value="UniProtKB-KW"/>
</dbReference>
<dbReference type="GO" id="GO:0009086">
    <property type="term" value="P:methionine biosynthetic process"/>
    <property type="evidence" value="ECO:0007669"/>
    <property type="project" value="UniProtKB-KW"/>
</dbReference>
<dbReference type="GO" id="GO:0006164">
    <property type="term" value="P:purine nucleotide biosynthetic process"/>
    <property type="evidence" value="ECO:0007669"/>
    <property type="project" value="UniProtKB-KW"/>
</dbReference>
<dbReference type="GO" id="GO:0035999">
    <property type="term" value="P:tetrahydrofolate interconversion"/>
    <property type="evidence" value="ECO:0007669"/>
    <property type="project" value="UniProtKB-UniRule"/>
</dbReference>
<dbReference type="CDD" id="cd01080">
    <property type="entry name" value="NAD_bind_m-THF_DH_Cyclohyd"/>
    <property type="match status" value="1"/>
</dbReference>
<dbReference type="FunFam" id="3.40.50.10860:FF:000001">
    <property type="entry name" value="Bifunctional protein FolD"/>
    <property type="match status" value="1"/>
</dbReference>
<dbReference type="FunFam" id="3.40.50.720:FF:000006">
    <property type="entry name" value="Bifunctional protein FolD"/>
    <property type="match status" value="1"/>
</dbReference>
<dbReference type="Gene3D" id="3.40.50.10860">
    <property type="entry name" value="Leucine Dehydrogenase, chain A, domain 1"/>
    <property type="match status" value="1"/>
</dbReference>
<dbReference type="Gene3D" id="3.40.50.720">
    <property type="entry name" value="NAD(P)-binding Rossmann-like Domain"/>
    <property type="match status" value="1"/>
</dbReference>
<dbReference type="HAMAP" id="MF_01576">
    <property type="entry name" value="THF_DHG_CYH"/>
    <property type="match status" value="1"/>
</dbReference>
<dbReference type="InterPro" id="IPR046346">
    <property type="entry name" value="Aminoacid_DH-like_N_sf"/>
</dbReference>
<dbReference type="InterPro" id="IPR036291">
    <property type="entry name" value="NAD(P)-bd_dom_sf"/>
</dbReference>
<dbReference type="InterPro" id="IPR000672">
    <property type="entry name" value="THF_DH/CycHdrlase"/>
</dbReference>
<dbReference type="InterPro" id="IPR020630">
    <property type="entry name" value="THF_DH/CycHdrlase_cat_dom"/>
</dbReference>
<dbReference type="InterPro" id="IPR020867">
    <property type="entry name" value="THF_DH/CycHdrlase_CS"/>
</dbReference>
<dbReference type="InterPro" id="IPR020631">
    <property type="entry name" value="THF_DH/CycHdrlase_NAD-bd_dom"/>
</dbReference>
<dbReference type="NCBIfam" id="NF008058">
    <property type="entry name" value="PRK10792.1"/>
    <property type="match status" value="1"/>
</dbReference>
<dbReference type="NCBIfam" id="NF010783">
    <property type="entry name" value="PRK14186.1"/>
    <property type="match status" value="1"/>
</dbReference>
<dbReference type="PANTHER" id="PTHR48099:SF5">
    <property type="entry name" value="C-1-TETRAHYDROFOLATE SYNTHASE, CYTOPLASMIC"/>
    <property type="match status" value="1"/>
</dbReference>
<dbReference type="PANTHER" id="PTHR48099">
    <property type="entry name" value="C-1-TETRAHYDROFOLATE SYNTHASE, CYTOPLASMIC-RELATED"/>
    <property type="match status" value="1"/>
</dbReference>
<dbReference type="Pfam" id="PF00763">
    <property type="entry name" value="THF_DHG_CYH"/>
    <property type="match status" value="1"/>
</dbReference>
<dbReference type="Pfam" id="PF02882">
    <property type="entry name" value="THF_DHG_CYH_C"/>
    <property type="match status" value="1"/>
</dbReference>
<dbReference type="PRINTS" id="PR00085">
    <property type="entry name" value="THFDHDRGNASE"/>
</dbReference>
<dbReference type="SUPFAM" id="SSF53223">
    <property type="entry name" value="Aminoacid dehydrogenase-like, N-terminal domain"/>
    <property type="match status" value="1"/>
</dbReference>
<dbReference type="SUPFAM" id="SSF51735">
    <property type="entry name" value="NAD(P)-binding Rossmann-fold domains"/>
    <property type="match status" value="1"/>
</dbReference>
<dbReference type="PROSITE" id="PS00766">
    <property type="entry name" value="THF_DHG_CYH_1"/>
    <property type="match status" value="1"/>
</dbReference>
<dbReference type="PROSITE" id="PS00767">
    <property type="entry name" value="THF_DHG_CYH_2"/>
    <property type="match status" value="1"/>
</dbReference>
<evidence type="ECO:0000255" key="1">
    <source>
        <dbReference type="HAMAP-Rule" id="MF_01576"/>
    </source>
</evidence>